<gene>
    <name evidence="1" type="primary">atpA</name>
    <name type="ordered locus">xcc-b100_3796</name>
</gene>
<feature type="chain" id="PRO_0000339064" description="ATP synthase subunit alpha">
    <location>
        <begin position="1"/>
        <end position="515"/>
    </location>
</feature>
<feature type="binding site" evidence="1">
    <location>
        <begin position="171"/>
        <end position="178"/>
    </location>
    <ligand>
        <name>ATP</name>
        <dbReference type="ChEBI" id="CHEBI:30616"/>
    </ligand>
</feature>
<feature type="site" description="Required for activity" evidence="1">
    <location>
        <position position="375"/>
    </location>
</feature>
<protein>
    <recommendedName>
        <fullName evidence="1">ATP synthase subunit alpha</fullName>
        <ecNumber evidence="1">7.1.2.2</ecNumber>
    </recommendedName>
    <alternativeName>
        <fullName evidence="1">ATP synthase F1 sector subunit alpha</fullName>
    </alternativeName>
    <alternativeName>
        <fullName evidence="1">F-ATPase subunit alpha</fullName>
    </alternativeName>
</protein>
<organism>
    <name type="scientific">Xanthomonas campestris pv. campestris (strain B100)</name>
    <dbReference type="NCBI Taxonomy" id="509169"/>
    <lineage>
        <taxon>Bacteria</taxon>
        <taxon>Pseudomonadati</taxon>
        <taxon>Pseudomonadota</taxon>
        <taxon>Gammaproteobacteria</taxon>
        <taxon>Lysobacterales</taxon>
        <taxon>Lysobacteraceae</taxon>
        <taxon>Xanthomonas</taxon>
    </lineage>
</organism>
<proteinExistence type="inferred from homology"/>
<accession>B0RWC4</accession>
<sequence>MATTLNPSEISDLIKTRIEAVKLSAESRNEGSVTSVSDGIVRIFGLADVMQGEMIELPNNTFALALNLERDSVGAVVLGDYENLREGDVAKTTGRILEVPVGPELLGRVVNALGEPIDGKGPLGATQTAPVERVAPGVIWRKSVDQPVQTGYKSVDAMIPIGRGQRELVIGDRQTGKTALAIDAVINQKGTGIKCVYVAIGQKASTVANIVRKLEENGALAHTVVVAATASESAAMQYISPYAGCTMGEYFMDRGEDALIVYDDLSKQAVAYRQISLLLKRPPGREAYPGDVFYLHSRLLERAARVSEEYVEKFTNGAVTGKTGSLTALPIIETQAGDVSAFVPTNVISITDGQIFLETDLFNAGIRPAVNAGISVSRVGGAAQTKIIKKLSGGIRISLAQYRELAAFAQFASDLDEATRKQLERGQRVTELMKQKQYAPMSIANQALSIYAVNEGYLDEVPVNKLLAFEEGLHAHFANTQGELVSKINTTGGWDNDIEAAFKKGIEEFKTTGSW</sequence>
<reference key="1">
    <citation type="journal article" date="2008" name="J. Biotechnol.">
        <title>The genome of Xanthomonas campestris pv. campestris B100 and its use for the reconstruction of metabolic pathways involved in xanthan biosynthesis.</title>
        <authorList>
            <person name="Vorhoelter F.-J."/>
            <person name="Schneiker S."/>
            <person name="Goesmann A."/>
            <person name="Krause L."/>
            <person name="Bekel T."/>
            <person name="Kaiser O."/>
            <person name="Linke B."/>
            <person name="Patschkowski T."/>
            <person name="Rueckert C."/>
            <person name="Schmid J."/>
            <person name="Sidhu V.K."/>
            <person name="Sieber V."/>
            <person name="Tauch A."/>
            <person name="Watt S.A."/>
            <person name="Weisshaar B."/>
            <person name="Becker A."/>
            <person name="Niehaus K."/>
            <person name="Puehler A."/>
        </authorList>
    </citation>
    <scope>NUCLEOTIDE SEQUENCE [LARGE SCALE GENOMIC DNA]</scope>
    <source>
        <strain>B100</strain>
    </source>
</reference>
<name>ATPA_XANCB</name>
<keyword id="KW-0066">ATP synthesis</keyword>
<keyword id="KW-0067">ATP-binding</keyword>
<keyword id="KW-0997">Cell inner membrane</keyword>
<keyword id="KW-1003">Cell membrane</keyword>
<keyword id="KW-0139">CF(1)</keyword>
<keyword id="KW-0375">Hydrogen ion transport</keyword>
<keyword id="KW-0406">Ion transport</keyword>
<keyword id="KW-0472">Membrane</keyword>
<keyword id="KW-0547">Nucleotide-binding</keyword>
<keyword id="KW-1278">Translocase</keyword>
<keyword id="KW-0813">Transport</keyword>
<comment type="function">
    <text evidence="1">Produces ATP from ADP in the presence of a proton gradient across the membrane. The alpha chain is a regulatory subunit.</text>
</comment>
<comment type="catalytic activity">
    <reaction evidence="1">
        <text>ATP + H2O + 4 H(+)(in) = ADP + phosphate + 5 H(+)(out)</text>
        <dbReference type="Rhea" id="RHEA:57720"/>
        <dbReference type="ChEBI" id="CHEBI:15377"/>
        <dbReference type="ChEBI" id="CHEBI:15378"/>
        <dbReference type="ChEBI" id="CHEBI:30616"/>
        <dbReference type="ChEBI" id="CHEBI:43474"/>
        <dbReference type="ChEBI" id="CHEBI:456216"/>
        <dbReference type="EC" id="7.1.2.2"/>
    </reaction>
</comment>
<comment type="subunit">
    <text evidence="1">F-type ATPases have 2 components, CF(1) - the catalytic core - and CF(0) - the membrane proton channel. CF(1) has five subunits: alpha(3), beta(3), gamma(1), delta(1), epsilon(1). CF(0) has three main subunits: a(1), b(2) and c(9-12). The alpha and beta chains form an alternating ring which encloses part of the gamma chain. CF(1) is attached to CF(0) by a central stalk formed by the gamma and epsilon chains, while a peripheral stalk is formed by the delta and b chains.</text>
</comment>
<comment type="subcellular location">
    <subcellularLocation>
        <location evidence="1">Cell inner membrane</location>
        <topology evidence="1">Peripheral membrane protein</topology>
    </subcellularLocation>
</comment>
<comment type="similarity">
    <text evidence="1">Belongs to the ATPase alpha/beta chains family.</text>
</comment>
<evidence type="ECO:0000255" key="1">
    <source>
        <dbReference type="HAMAP-Rule" id="MF_01346"/>
    </source>
</evidence>
<dbReference type="EC" id="7.1.2.2" evidence="1"/>
<dbReference type="EMBL" id="AM920689">
    <property type="protein sequence ID" value="CAP53163.1"/>
    <property type="molecule type" value="Genomic_DNA"/>
</dbReference>
<dbReference type="SMR" id="B0RWC4"/>
<dbReference type="KEGG" id="xca:xcc-b100_3796"/>
<dbReference type="HOGENOM" id="CLU_010091_2_1_6"/>
<dbReference type="Proteomes" id="UP000001188">
    <property type="component" value="Chromosome"/>
</dbReference>
<dbReference type="GO" id="GO:0005886">
    <property type="term" value="C:plasma membrane"/>
    <property type="evidence" value="ECO:0007669"/>
    <property type="project" value="UniProtKB-SubCell"/>
</dbReference>
<dbReference type="GO" id="GO:0045259">
    <property type="term" value="C:proton-transporting ATP synthase complex"/>
    <property type="evidence" value="ECO:0007669"/>
    <property type="project" value="UniProtKB-KW"/>
</dbReference>
<dbReference type="GO" id="GO:0043531">
    <property type="term" value="F:ADP binding"/>
    <property type="evidence" value="ECO:0007669"/>
    <property type="project" value="TreeGrafter"/>
</dbReference>
<dbReference type="GO" id="GO:0005524">
    <property type="term" value="F:ATP binding"/>
    <property type="evidence" value="ECO:0007669"/>
    <property type="project" value="UniProtKB-UniRule"/>
</dbReference>
<dbReference type="GO" id="GO:0046933">
    <property type="term" value="F:proton-transporting ATP synthase activity, rotational mechanism"/>
    <property type="evidence" value="ECO:0007669"/>
    <property type="project" value="UniProtKB-UniRule"/>
</dbReference>
<dbReference type="CDD" id="cd18113">
    <property type="entry name" value="ATP-synt_F1_alpha_C"/>
    <property type="match status" value="1"/>
</dbReference>
<dbReference type="CDD" id="cd18116">
    <property type="entry name" value="ATP-synt_F1_alpha_N"/>
    <property type="match status" value="1"/>
</dbReference>
<dbReference type="CDD" id="cd01132">
    <property type="entry name" value="F1-ATPase_alpha_CD"/>
    <property type="match status" value="1"/>
</dbReference>
<dbReference type="FunFam" id="1.20.150.20:FF:000001">
    <property type="entry name" value="ATP synthase subunit alpha"/>
    <property type="match status" value="1"/>
</dbReference>
<dbReference type="FunFam" id="2.40.30.20:FF:000001">
    <property type="entry name" value="ATP synthase subunit alpha"/>
    <property type="match status" value="1"/>
</dbReference>
<dbReference type="FunFam" id="3.40.50.300:FF:000002">
    <property type="entry name" value="ATP synthase subunit alpha"/>
    <property type="match status" value="1"/>
</dbReference>
<dbReference type="Gene3D" id="2.40.30.20">
    <property type="match status" value="1"/>
</dbReference>
<dbReference type="Gene3D" id="1.20.150.20">
    <property type="entry name" value="ATP synthase alpha/beta chain, C-terminal domain"/>
    <property type="match status" value="1"/>
</dbReference>
<dbReference type="Gene3D" id="3.40.50.300">
    <property type="entry name" value="P-loop containing nucleotide triphosphate hydrolases"/>
    <property type="match status" value="1"/>
</dbReference>
<dbReference type="HAMAP" id="MF_01346">
    <property type="entry name" value="ATP_synth_alpha_bact"/>
    <property type="match status" value="1"/>
</dbReference>
<dbReference type="InterPro" id="IPR023366">
    <property type="entry name" value="ATP_synth_asu-like_sf"/>
</dbReference>
<dbReference type="InterPro" id="IPR000793">
    <property type="entry name" value="ATP_synth_asu_C"/>
</dbReference>
<dbReference type="InterPro" id="IPR038376">
    <property type="entry name" value="ATP_synth_asu_C_sf"/>
</dbReference>
<dbReference type="InterPro" id="IPR033732">
    <property type="entry name" value="ATP_synth_F1_a_nt-bd_dom"/>
</dbReference>
<dbReference type="InterPro" id="IPR005294">
    <property type="entry name" value="ATP_synth_F1_asu"/>
</dbReference>
<dbReference type="InterPro" id="IPR020003">
    <property type="entry name" value="ATPase_a/bsu_AS"/>
</dbReference>
<dbReference type="InterPro" id="IPR004100">
    <property type="entry name" value="ATPase_F1/V1/A1_a/bsu_N"/>
</dbReference>
<dbReference type="InterPro" id="IPR036121">
    <property type="entry name" value="ATPase_F1/V1/A1_a/bsu_N_sf"/>
</dbReference>
<dbReference type="InterPro" id="IPR000194">
    <property type="entry name" value="ATPase_F1/V1/A1_a/bsu_nucl-bd"/>
</dbReference>
<dbReference type="InterPro" id="IPR027417">
    <property type="entry name" value="P-loop_NTPase"/>
</dbReference>
<dbReference type="NCBIfam" id="TIGR00962">
    <property type="entry name" value="atpA"/>
    <property type="match status" value="1"/>
</dbReference>
<dbReference type="NCBIfam" id="NF009884">
    <property type="entry name" value="PRK13343.1"/>
    <property type="match status" value="1"/>
</dbReference>
<dbReference type="PANTHER" id="PTHR48082">
    <property type="entry name" value="ATP SYNTHASE SUBUNIT ALPHA, MITOCHONDRIAL"/>
    <property type="match status" value="1"/>
</dbReference>
<dbReference type="PANTHER" id="PTHR48082:SF2">
    <property type="entry name" value="ATP SYNTHASE SUBUNIT ALPHA, MITOCHONDRIAL"/>
    <property type="match status" value="1"/>
</dbReference>
<dbReference type="Pfam" id="PF00006">
    <property type="entry name" value="ATP-synt_ab"/>
    <property type="match status" value="1"/>
</dbReference>
<dbReference type="Pfam" id="PF00306">
    <property type="entry name" value="ATP-synt_ab_C"/>
    <property type="match status" value="1"/>
</dbReference>
<dbReference type="Pfam" id="PF02874">
    <property type="entry name" value="ATP-synt_ab_N"/>
    <property type="match status" value="1"/>
</dbReference>
<dbReference type="SUPFAM" id="SSF47917">
    <property type="entry name" value="C-terminal domain of alpha and beta subunits of F1 ATP synthase"/>
    <property type="match status" value="1"/>
</dbReference>
<dbReference type="SUPFAM" id="SSF50615">
    <property type="entry name" value="N-terminal domain of alpha and beta subunits of F1 ATP synthase"/>
    <property type="match status" value="1"/>
</dbReference>
<dbReference type="SUPFAM" id="SSF52540">
    <property type="entry name" value="P-loop containing nucleoside triphosphate hydrolases"/>
    <property type="match status" value="1"/>
</dbReference>
<dbReference type="PROSITE" id="PS00152">
    <property type="entry name" value="ATPASE_ALPHA_BETA"/>
    <property type="match status" value="1"/>
</dbReference>